<proteinExistence type="inferred from homology"/>
<reference key="1">
    <citation type="journal article" date="2008" name="DNA Res.">
        <title>Complete genome sequence and comparative analysis of the wild-type commensal Escherichia coli strain SE11 isolated from a healthy adult.</title>
        <authorList>
            <person name="Oshima K."/>
            <person name="Toh H."/>
            <person name="Ogura Y."/>
            <person name="Sasamoto H."/>
            <person name="Morita H."/>
            <person name="Park S.-H."/>
            <person name="Ooka T."/>
            <person name="Iyoda S."/>
            <person name="Taylor T.D."/>
            <person name="Hayashi T."/>
            <person name="Itoh K."/>
            <person name="Hattori M."/>
        </authorList>
    </citation>
    <scope>NUCLEOTIDE SEQUENCE [LARGE SCALE GENOMIC DNA]</scope>
    <source>
        <strain>SE11</strain>
    </source>
</reference>
<dbReference type="EMBL" id="AP009240">
    <property type="protein sequence ID" value="BAG79570.1"/>
    <property type="molecule type" value="Genomic_DNA"/>
</dbReference>
<dbReference type="RefSeq" id="WP_000379246.1">
    <property type="nucleotide sequence ID" value="NC_011415.1"/>
</dbReference>
<dbReference type="SMR" id="B6I4A0"/>
<dbReference type="GeneID" id="75204755"/>
<dbReference type="KEGG" id="ecy:ECSE_4046"/>
<dbReference type="HOGENOM" id="CLU_039613_8_2_6"/>
<dbReference type="Proteomes" id="UP000008199">
    <property type="component" value="Chromosome"/>
</dbReference>
<dbReference type="GO" id="GO:0003677">
    <property type="term" value="F:DNA binding"/>
    <property type="evidence" value="ECO:0007669"/>
    <property type="project" value="UniProtKB-KW"/>
</dbReference>
<dbReference type="GO" id="GO:0003700">
    <property type="term" value="F:DNA-binding transcription factor activity"/>
    <property type="evidence" value="ECO:0007669"/>
    <property type="project" value="UniProtKB-UniRule"/>
</dbReference>
<dbReference type="GO" id="GO:0045892">
    <property type="term" value="P:negative regulation of DNA-templated transcription"/>
    <property type="evidence" value="ECO:0007669"/>
    <property type="project" value="UniProtKB-UniRule"/>
</dbReference>
<dbReference type="FunFam" id="1.10.10.10:FF:000001">
    <property type="entry name" value="LysR family transcriptional regulator"/>
    <property type="match status" value="1"/>
</dbReference>
<dbReference type="Gene3D" id="3.40.190.10">
    <property type="entry name" value="Periplasmic binding protein-like II"/>
    <property type="match status" value="2"/>
</dbReference>
<dbReference type="Gene3D" id="1.10.10.10">
    <property type="entry name" value="Winged helix-like DNA-binding domain superfamily/Winged helix DNA-binding domain"/>
    <property type="match status" value="1"/>
</dbReference>
<dbReference type="HAMAP" id="MF_01233">
    <property type="entry name" value="HTH_type_HdfR"/>
    <property type="match status" value="1"/>
</dbReference>
<dbReference type="InterPro" id="IPR050176">
    <property type="entry name" value="LTTR"/>
</dbReference>
<dbReference type="InterPro" id="IPR005119">
    <property type="entry name" value="LysR_subst-bd"/>
</dbReference>
<dbReference type="InterPro" id="IPR020890">
    <property type="entry name" value="Tscrpt_reg_HTH_HdfR"/>
</dbReference>
<dbReference type="InterPro" id="IPR000847">
    <property type="entry name" value="Tscrpt_reg_HTH_LysR"/>
</dbReference>
<dbReference type="InterPro" id="IPR036388">
    <property type="entry name" value="WH-like_DNA-bd_sf"/>
</dbReference>
<dbReference type="InterPro" id="IPR036390">
    <property type="entry name" value="WH_DNA-bd_sf"/>
</dbReference>
<dbReference type="NCBIfam" id="NF002946">
    <property type="entry name" value="PRK03601.1"/>
    <property type="match status" value="1"/>
</dbReference>
<dbReference type="PANTHER" id="PTHR30579:SF8">
    <property type="entry name" value="HTH-TYPE TRANSCRIPTIONAL REGULATOR HDFR"/>
    <property type="match status" value="1"/>
</dbReference>
<dbReference type="PANTHER" id="PTHR30579">
    <property type="entry name" value="TRANSCRIPTIONAL REGULATOR"/>
    <property type="match status" value="1"/>
</dbReference>
<dbReference type="Pfam" id="PF00126">
    <property type="entry name" value="HTH_1"/>
    <property type="match status" value="1"/>
</dbReference>
<dbReference type="Pfam" id="PF03466">
    <property type="entry name" value="LysR_substrate"/>
    <property type="match status" value="1"/>
</dbReference>
<dbReference type="PRINTS" id="PR00039">
    <property type="entry name" value="HTHLYSR"/>
</dbReference>
<dbReference type="SUPFAM" id="SSF53850">
    <property type="entry name" value="Periplasmic binding protein-like II"/>
    <property type="match status" value="1"/>
</dbReference>
<dbReference type="SUPFAM" id="SSF46785">
    <property type="entry name" value="Winged helix' DNA-binding domain"/>
    <property type="match status" value="1"/>
</dbReference>
<dbReference type="PROSITE" id="PS50931">
    <property type="entry name" value="HTH_LYSR"/>
    <property type="match status" value="1"/>
</dbReference>
<feature type="chain" id="PRO_1000139668" description="HTH-type transcriptional regulator HdfR">
    <location>
        <begin position="1"/>
        <end position="279"/>
    </location>
</feature>
<feature type="domain" description="HTH lysR-type" evidence="1">
    <location>
        <begin position="1"/>
        <end position="58"/>
    </location>
</feature>
<feature type="DNA-binding region" description="H-T-H motif" evidence="1">
    <location>
        <begin position="18"/>
        <end position="37"/>
    </location>
</feature>
<accession>B6I4A0</accession>
<comment type="function">
    <text evidence="1">Negatively regulates the transcription of the flagellar master operon flhDC by binding to the upstream region of the operon.</text>
</comment>
<comment type="similarity">
    <text evidence="2">Belongs to the LysR transcriptional regulatory family.</text>
</comment>
<sequence length="279" mass="31776">MDTELLKTFLEVSRTRHFGRAAESLYLTQSAVSFRIRQLENQLGVNLFTRHRNNIRLTAAGEKLLPYAETLMSTWQAARKEVAHTSRHNEFSIGASASLWECMLNQWLGRLYQNQDAHTGLQFEARIAQRQSLVKQLHERQLDLLITTEAPKMDEFSSQLLGYFTLALYTSAPSKLKGDLNYLRLEWGPDFQQHEAGLIGADEVPILTTSSAELAQQQIAMLNGCTWLPVSWARKKGGLHTVVDSTTLSRPLYAIWLQNSDKNTLIRDLLKINVLDEVY</sequence>
<keyword id="KW-0238">DNA-binding</keyword>
<keyword id="KW-0678">Repressor</keyword>
<keyword id="KW-0804">Transcription</keyword>
<keyword id="KW-0805">Transcription regulation</keyword>
<evidence type="ECO:0000255" key="1">
    <source>
        <dbReference type="HAMAP-Rule" id="MF_01233"/>
    </source>
</evidence>
<evidence type="ECO:0000305" key="2"/>
<organism>
    <name type="scientific">Escherichia coli (strain SE11)</name>
    <dbReference type="NCBI Taxonomy" id="409438"/>
    <lineage>
        <taxon>Bacteria</taxon>
        <taxon>Pseudomonadati</taxon>
        <taxon>Pseudomonadota</taxon>
        <taxon>Gammaproteobacteria</taxon>
        <taxon>Enterobacterales</taxon>
        <taxon>Enterobacteriaceae</taxon>
        <taxon>Escherichia</taxon>
    </lineage>
</organism>
<gene>
    <name evidence="1" type="primary">hdfR</name>
    <name type="ordered locus">ECSE_4046</name>
</gene>
<protein>
    <recommendedName>
        <fullName evidence="1">HTH-type transcriptional regulator HdfR</fullName>
    </recommendedName>
    <alternativeName>
        <fullName evidence="1">H-NS-dependent flhDC regulator</fullName>
    </alternativeName>
</protein>
<name>HDFR_ECOSE</name>